<dbReference type="EC" id="3.6.5.n1" evidence="1"/>
<dbReference type="EMBL" id="AP006716">
    <property type="protein sequence ID" value="BAE04641.1"/>
    <property type="molecule type" value="Genomic_DNA"/>
</dbReference>
<dbReference type="RefSeq" id="WP_011275629.1">
    <property type="nucleotide sequence ID" value="NC_007168.1"/>
</dbReference>
<dbReference type="SMR" id="Q4L6T4"/>
<dbReference type="GeneID" id="93780732"/>
<dbReference type="KEGG" id="sha:SH1332"/>
<dbReference type="eggNOG" id="COG0481">
    <property type="taxonomic scope" value="Bacteria"/>
</dbReference>
<dbReference type="HOGENOM" id="CLU_009995_3_3_9"/>
<dbReference type="OrthoDB" id="9804431at2"/>
<dbReference type="Proteomes" id="UP000000543">
    <property type="component" value="Chromosome"/>
</dbReference>
<dbReference type="GO" id="GO:0005886">
    <property type="term" value="C:plasma membrane"/>
    <property type="evidence" value="ECO:0007669"/>
    <property type="project" value="UniProtKB-SubCell"/>
</dbReference>
<dbReference type="GO" id="GO:0005525">
    <property type="term" value="F:GTP binding"/>
    <property type="evidence" value="ECO:0007669"/>
    <property type="project" value="UniProtKB-UniRule"/>
</dbReference>
<dbReference type="GO" id="GO:0003924">
    <property type="term" value="F:GTPase activity"/>
    <property type="evidence" value="ECO:0007669"/>
    <property type="project" value="UniProtKB-UniRule"/>
</dbReference>
<dbReference type="GO" id="GO:0043022">
    <property type="term" value="F:ribosome binding"/>
    <property type="evidence" value="ECO:0007669"/>
    <property type="project" value="UniProtKB-UniRule"/>
</dbReference>
<dbReference type="GO" id="GO:0003746">
    <property type="term" value="F:translation elongation factor activity"/>
    <property type="evidence" value="ECO:0007669"/>
    <property type="project" value="UniProtKB-UniRule"/>
</dbReference>
<dbReference type="GO" id="GO:0045727">
    <property type="term" value="P:positive regulation of translation"/>
    <property type="evidence" value="ECO:0007669"/>
    <property type="project" value="UniProtKB-UniRule"/>
</dbReference>
<dbReference type="CDD" id="cd03699">
    <property type="entry name" value="EF4_II"/>
    <property type="match status" value="1"/>
</dbReference>
<dbReference type="CDD" id="cd16260">
    <property type="entry name" value="EF4_III"/>
    <property type="match status" value="1"/>
</dbReference>
<dbReference type="CDD" id="cd01890">
    <property type="entry name" value="LepA"/>
    <property type="match status" value="1"/>
</dbReference>
<dbReference type="CDD" id="cd03709">
    <property type="entry name" value="lepA_C"/>
    <property type="match status" value="1"/>
</dbReference>
<dbReference type="FunFam" id="3.40.50.300:FF:000078">
    <property type="entry name" value="Elongation factor 4"/>
    <property type="match status" value="1"/>
</dbReference>
<dbReference type="FunFam" id="2.40.30.10:FF:000015">
    <property type="entry name" value="Translation factor GUF1, mitochondrial"/>
    <property type="match status" value="1"/>
</dbReference>
<dbReference type="FunFam" id="3.30.70.240:FF:000007">
    <property type="entry name" value="Translation factor GUF1, mitochondrial"/>
    <property type="match status" value="1"/>
</dbReference>
<dbReference type="FunFam" id="3.30.70.2570:FF:000001">
    <property type="entry name" value="Translation factor GUF1, mitochondrial"/>
    <property type="match status" value="1"/>
</dbReference>
<dbReference type="FunFam" id="3.30.70.870:FF:000004">
    <property type="entry name" value="Translation factor GUF1, mitochondrial"/>
    <property type="match status" value="1"/>
</dbReference>
<dbReference type="Gene3D" id="3.30.70.240">
    <property type="match status" value="1"/>
</dbReference>
<dbReference type="Gene3D" id="3.30.70.2570">
    <property type="entry name" value="Elongation factor 4, C-terminal domain"/>
    <property type="match status" value="1"/>
</dbReference>
<dbReference type="Gene3D" id="3.30.70.870">
    <property type="entry name" value="Elongation Factor G (Translational Gtpase), domain 3"/>
    <property type="match status" value="1"/>
</dbReference>
<dbReference type="Gene3D" id="3.40.50.300">
    <property type="entry name" value="P-loop containing nucleotide triphosphate hydrolases"/>
    <property type="match status" value="1"/>
</dbReference>
<dbReference type="Gene3D" id="2.40.30.10">
    <property type="entry name" value="Translation factors"/>
    <property type="match status" value="1"/>
</dbReference>
<dbReference type="HAMAP" id="MF_00071">
    <property type="entry name" value="LepA"/>
    <property type="match status" value="1"/>
</dbReference>
<dbReference type="InterPro" id="IPR006297">
    <property type="entry name" value="EF-4"/>
</dbReference>
<dbReference type="InterPro" id="IPR041095">
    <property type="entry name" value="EFG_II"/>
</dbReference>
<dbReference type="InterPro" id="IPR035647">
    <property type="entry name" value="EFG_III/V"/>
</dbReference>
<dbReference type="InterPro" id="IPR000640">
    <property type="entry name" value="EFG_V-like"/>
</dbReference>
<dbReference type="InterPro" id="IPR004161">
    <property type="entry name" value="EFTu-like_2"/>
</dbReference>
<dbReference type="InterPro" id="IPR031157">
    <property type="entry name" value="G_TR_CS"/>
</dbReference>
<dbReference type="InterPro" id="IPR038363">
    <property type="entry name" value="LepA_C_sf"/>
</dbReference>
<dbReference type="InterPro" id="IPR013842">
    <property type="entry name" value="LepA_CTD"/>
</dbReference>
<dbReference type="InterPro" id="IPR035654">
    <property type="entry name" value="LepA_IV"/>
</dbReference>
<dbReference type="InterPro" id="IPR027417">
    <property type="entry name" value="P-loop_NTPase"/>
</dbReference>
<dbReference type="InterPro" id="IPR005225">
    <property type="entry name" value="Small_GTP-bd"/>
</dbReference>
<dbReference type="InterPro" id="IPR000795">
    <property type="entry name" value="T_Tr_GTP-bd_dom"/>
</dbReference>
<dbReference type="NCBIfam" id="TIGR01393">
    <property type="entry name" value="lepA"/>
    <property type="match status" value="1"/>
</dbReference>
<dbReference type="NCBIfam" id="TIGR00231">
    <property type="entry name" value="small_GTP"/>
    <property type="match status" value="1"/>
</dbReference>
<dbReference type="PANTHER" id="PTHR43512:SF4">
    <property type="entry name" value="TRANSLATION FACTOR GUF1 HOMOLOG, CHLOROPLASTIC"/>
    <property type="match status" value="1"/>
</dbReference>
<dbReference type="PANTHER" id="PTHR43512">
    <property type="entry name" value="TRANSLATION FACTOR GUF1-RELATED"/>
    <property type="match status" value="1"/>
</dbReference>
<dbReference type="Pfam" id="PF00679">
    <property type="entry name" value="EFG_C"/>
    <property type="match status" value="1"/>
</dbReference>
<dbReference type="Pfam" id="PF14492">
    <property type="entry name" value="EFG_III"/>
    <property type="match status" value="1"/>
</dbReference>
<dbReference type="Pfam" id="PF00009">
    <property type="entry name" value="GTP_EFTU"/>
    <property type="match status" value="1"/>
</dbReference>
<dbReference type="Pfam" id="PF03144">
    <property type="entry name" value="GTP_EFTU_D2"/>
    <property type="match status" value="1"/>
</dbReference>
<dbReference type="Pfam" id="PF06421">
    <property type="entry name" value="LepA_C"/>
    <property type="match status" value="1"/>
</dbReference>
<dbReference type="PRINTS" id="PR00315">
    <property type="entry name" value="ELONGATNFCT"/>
</dbReference>
<dbReference type="SMART" id="SM00838">
    <property type="entry name" value="EFG_C"/>
    <property type="match status" value="1"/>
</dbReference>
<dbReference type="SUPFAM" id="SSF54980">
    <property type="entry name" value="EF-G C-terminal domain-like"/>
    <property type="match status" value="2"/>
</dbReference>
<dbReference type="SUPFAM" id="SSF52540">
    <property type="entry name" value="P-loop containing nucleoside triphosphate hydrolases"/>
    <property type="match status" value="1"/>
</dbReference>
<dbReference type="PROSITE" id="PS00301">
    <property type="entry name" value="G_TR_1"/>
    <property type="match status" value="1"/>
</dbReference>
<dbReference type="PROSITE" id="PS51722">
    <property type="entry name" value="G_TR_2"/>
    <property type="match status" value="1"/>
</dbReference>
<name>LEPA_STAHJ</name>
<accession>Q4L6T4</accession>
<reference key="1">
    <citation type="journal article" date="2005" name="J. Bacteriol.">
        <title>Whole-genome sequencing of Staphylococcus haemolyticus uncovers the extreme plasticity of its genome and the evolution of human-colonizing staphylococcal species.</title>
        <authorList>
            <person name="Takeuchi F."/>
            <person name="Watanabe S."/>
            <person name="Baba T."/>
            <person name="Yuzawa H."/>
            <person name="Ito T."/>
            <person name="Morimoto Y."/>
            <person name="Kuroda M."/>
            <person name="Cui L."/>
            <person name="Takahashi M."/>
            <person name="Ankai A."/>
            <person name="Baba S."/>
            <person name="Fukui S."/>
            <person name="Lee J.C."/>
            <person name="Hiramatsu K."/>
        </authorList>
    </citation>
    <scope>NUCLEOTIDE SEQUENCE [LARGE SCALE GENOMIC DNA]</scope>
    <source>
        <strain>JCSC1435</strain>
    </source>
</reference>
<feature type="chain" id="PRO_0000224798" description="Elongation factor 4">
    <location>
        <begin position="1"/>
        <end position="607"/>
    </location>
</feature>
<feature type="domain" description="tr-type G">
    <location>
        <begin position="11"/>
        <end position="193"/>
    </location>
</feature>
<feature type="binding site" evidence="1">
    <location>
        <begin position="23"/>
        <end position="28"/>
    </location>
    <ligand>
        <name>GTP</name>
        <dbReference type="ChEBI" id="CHEBI:37565"/>
    </ligand>
</feature>
<feature type="binding site" evidence="1">
    <location>
        <begin position="140"/>
        <end position="143"/>
    </location>
    <ligand>
        <name>GTP</name>
        <dbReference type="ChEBI" id="CHEBI:37565"/>
    </ligand>
</feature>
<sequence>MDMQERYNRRENIRNFSIIAHIDHGKSTLADRILENTKSVETREMQDQLLDSMDLERERGITIKLNAVRLKYEANDGQTYTFHLIDTPGHVDFSYEVSRSLAACEGAILVVDAAQGIEAQTLANVYLALDNDLELLPVVNKIDLPAAEPERVKQELEDVIGLNQDDVVLASAKSNIGIEDILEKIVEVVPPPEGDPSEPLKALIFDSEYDPYRGVISSIRVMEGVVKAGDKIKMMATGKEFEVSEVGINTPKQLPIEELTVGDVGYIIASIKNVDDSRVGDTITHANRPAEAPLKGYKKMNPMVYCGLFPIENKDYNDLREALEKLQLNDASLEFEPESSQALGFGFRTGFLGMLHMEIIQERIEREFGIELIATAPSVIYQCIMKDGSEVTVDNPAQMPERDKIDSIYEPYVKATMMVPNDYVGAVMELCQRKRGQFINMDYLDDIRVNIVYEIPLSEVVFDFFDQLKSNTKGYASFDYEFIENKESNLVKMDILLNGDKVDALSFIVHKDFAYERGKALVEKLKTLIPRQQFEVPVQAAIGQKIVARTNIKSMGKNVLSKCYGGDISRKRKLLEKQKAGKAKMKAVGSVEIPQDAFLAVLKMDDE</sequence>
<proteinExistence type="inferred from homology"/>
<organism>
    <name type="scientific">Staphylococcus haemolyticus (strain JCSC1435)</name>
    <dbReference type="NCBI Taxonomy" id="279808"/>
    <lineage>
        <taxon>Bacteria</taxon>
        <taxon>Bacillati</taxon>
        <taxon>Bacillota</taxon>
        <taxon>Bacilli</taxon>
        <taxon>Bacillales</taxon>
        <taxon>Staphylococcaceae</taxon>
        <taxon>Staphylococcus</taxon>
    </lineage>
</organism>
<evidence type="ECO:0000255" key="1">
    <source>
        <dbReference type="HAMAP-Rule" id="MF_00071"/>
    </source>
</evidence>
<protein>
    <recommendedName>
        <fullName evidence="1">Elongation factor 4</fullName>
        <shortName evidence="1">EF-4</shortName>
        <ecNumber evidence="1">3.6.5.n1</ecNumber>
    </recommendedName>
    <alternativeName>
        <fullName evidence="1">Ribosomal back-translocase LepA</fullName>
    </alternativeName>
</protein>
<keyword id="KW-1003">Cell membrane</keyword>
<keyword id="KW-0342">GTP-binding</keyword>
<keyword id="KW-0378">Hydrolase</keyword>
<keyword id="KW-0472">Membrane</keyword>
<keyword id="KW-0547">Nucleotide-binding</keyword>
<keyword id="KW-0648">Protein biosynthesis</keyword>
<gene>
    <name evidence="1" type="primary">lepA</name>
    <name type="ordered locus">SH1332</name>
</gene>
<comment type="function">
    <text evidence="1">Required for accurate and efficient protein synthesis under certain stress conditions. May act as a fidelity factor of the translation reaction, by catalyzing a one-codon backward translocation of tRNAs on improperly translocated ribosomes. Back-translocation proceeds from a post-translocation (POST) complex to a pre-translocation (PRE) complex, thus giving elongation factor G a second chance to translocate the tRNAs correctly. Binds to ribosomes in a GTP-dependent manner.</text>
</comment>
<comment type="catalytic activity">
    <reaction evidence="1">
        <text>GTP + H2O = GDP + phosphate + H(+)</text>
        <dbReference type="Rhea" id="RHEA:19669"/>
        <dbReference type="ChEBI" id="CHEBI:15377"/>
        <dbReference type="ChEBI" id="CHEBI:15378"/>
        <dbReference type="ChEBI" id="CHEBI:37565"/>
        <dbReference type="ChEBI" id="CHEBI:43474"/>
        <dbReference type="ChEBI" id="CHEBI:58189"/>
        <dbReference type="EC" id="3.6.5.n1"/>
    </reaction>
</comment>
<comment type="subcellular location">
    <subcellularLocation>
        <location evidence="1">Cell membrane</location>
        <topology evidence="1">Peripheral membrane protein</topology>
        <orientation evidence="1">Cytoplasmic side</orientation>
    </subcellularLocation>
</comment>
<comment type="similarity">
    <text evidence="1">Belongs to the TRAFAC class translation factor GTPase superfamily. Classic translation factor GTPase family. LepA subfamily.</text>
</comment>